<keyword id="KW-0143">Chaperone</keyword>
<keyword id="KW-0963">Cytoplasm</keyword>
<keyword id="KW-0533">Nickel</keyword>
<keyword id="KW-0996">Nickel insertion</keyword>
<keyword id="KW-1185">Reference proteome</keyword>
<sequence length="154" mass="17305">MPYRSTEVLSPGPGERAPLHRLTLTHEQRHLRRKLLHLENDDVVMLDLKEPVMLADGDLLVLEGGGHIEVKAAAEALYDIRARNPLHLMELAWHLGNRHLPAAVEEGRILIARDPVIRAMLEGLGATVDEVNEPFHPLHGAYHQHGHGDHYRHG</sequence>
<feature type="chain" id="PRO_0000223433" description="Urease accessory protein UreE">
    <location>
        <begin position="1"/>
        <end position="154"/>
    </location>
</feature>
<gene>
    <name evidence="1" type="primary">ureE</name>
    <name type="ordered locus">R02465</name>
    <name type="ORF">SMc01832</name>
</gene>
<protein>
    <recommendedName>
        <fullName evidence="1">Urease accessory protein UreE</fullName>
    </recommendedName>
</protein>
<organism>
    <name type="scientific">Rhizobium meliloti (strain 1021)</name>
    <name type="common">Ensifer meliloti</name>
    <name type="synonym">Sinorhizobium meliloti</name>
    <dbReference type="NCBI Taxonomy" id="266834"/>
    <lineage>
        <taxon>Bacteria</taxon>
        <taxon>Pseudomonadati</taxon>
        <taxon>Pseudomonadota</taxon>
        <taxon>Alphaproteobacteria</taxon>
        <taxon>Hyphomicrobiales</taxon>
        <taxon>Rhizobiaceae</taxon>
        <taxon>Sinorhizobium/Ensifer group</taxon>
        <taxon>Sinorhizobium</taxon>
    </lineage>
</organism>
<dbReference type="EMBL" id="AL591688">
    <property type="protein sequence ID" value="CAC47044.1"/>
    <property type="molecule type" value="Genomic_DNA"/>
</dbReference>
<dbReference type="RefSeq" id="NP_386571.1">
    <property type="nucleotide sequence ID" value="NC_003047.1"/>
</dbReference>
<dbReference type="RefSeq" id="WP_010969957.1">
    <property type="nucleotide sequence ID" value="NC_003047.1"/>
</dbReference>
<dbReference type="SMR" id="Q92MY3"/>
<dbReference type="EnsemblBacteria" id="CAC47044">
    <property type="protein sequence ID" value="CAC47044"/>
    <property type="gene ID" value="SMc01832"/>
</dbReference>
<dbReference type="KEGG" id="sme:SMc01832"/>
<dbReference type="PATRIC" id="fig|266834.11.peg.3953"/>
<dbReference type="eggNOG" id="COG2371">
    <property type="taxonomic scope" value="Bacteria"/>
</dbReference>
<dbReference type="HOGENOM" id="CLU_093757_1_0_5"/>
<dbReference type="OrthoDB" id="9802215at2"/>
<dbReference type="Proteomes" id="UP000001976">
    <property type="component" value="Chromosome"/>
</dbReference>
<dbReference type="GO" id="GO:0005737">
    <property type="term" value="C:cytoplasm"/>
    <property type="evidence" value="ECO:0007669"/>
    <property type="project" value="UniProtKB-SubCell"/>
</dbReference>
<dbReference type="GO" id="GO:0016151">
    <property type="term" value="F:nickel cation binding"/>
    <property type="evidence" value="ECO:0007669"/>
    <property type="project" value="UniProtKB-UniRule"/>
</dbReference>
<dbReference type="GO" id="GO:0051082">
    <property type="term" value="F:unfolded protein binding"/>
    <property type="evidence" value="ECO:0007669"/>
    <property type="project" value="UniProtKB-UniRule"/>
</dbReference>
<dbReference type="GO" id="GO:0006457">
    <property type="term" value="P:protein folding"/>
    <property type="evidence" value="ECO:0007669"/>
    <property type="project" value="InterPro"/>
</dbReference>
<dbReference type="GO" id="GO:0065003">
    <property type="term" value="P:protein-containing complex assembly"/>
    <property type="evidence" value="ECO:0007669"/>
    <property type="project" value="InterPro"/>
</dbReference>
<dbReference type="GO" id="GO:0019627">
    <property type="term" value="P:urea metabolic process"/>
    <property type="evidence" value="ECO:0007669"/>
    <property type="project" value="InterPro"/>
</dbReference>
<dbReference type="CDD" id="cd00571">
    <property type="entry name" value="UreE"/>
    <property type="match status" value="1"/>
</dbReference>
<dbReference type="Gene3D" id="2.60.260.20">
    <property type="entry name" value="Urease metallochaperone UreE, N-terminal domain"/>
    <property type="match status" value="1"/>
</dbReference>
<dbReference type="Gene3D" id="3.30.70.790">
    <property type="entry name" value="UreE, C-terminal domain"/>
    <property type="match status" value="1"/>
</dbReference>
<dbReference type="HAMAP" id="MF_00822">
    <property type="entry name" value="UreE"/>
    <property type="match status" value="1"/>
</dbReference>
<dbReference type="InterPro" id="IPR012406">
    <property type="entry name" value="UreE"/>
</dbReference>
<dbReference type="InterPro" id="IPR007864">
    <property type="entry name" value="UreE_C_dom"/>
</dbReference>
<dbReference type="InterPro" id="IPR004029">
    <property type="entry name" value="UreE_N"/>
</dbReference>
<dbReference type="InterPro" id="IPR036118">
    <property type="entry name" value="UreE_N_sf"/>
</dbReference>
<dbReference type="NCBIfam" id="NF009760">
    <property type="entry name" value="PRK13261.2-6"/>
    <property type="match status" value="1"/>
</dbReference>
<dbReference type="Pfam" id="PF05194">
    <property type="entry name" value="UreE_C"/>
    <property type="match status" value="1"/>
</dbReference>
<dbReference type="Pfam" id="PF02814">
    <property type="entry name" value="UreE_N"/>
    <property type="match status" value="1"/>
</dbReference>
<dbReference type="PIRSF" id="PIRSF036402">
    <property type="entry name" value="Ureas_acces_UreE"/>
    <property type="match status" value="1"/>
</dbReference>
<dbReference type="SMART" id="SM00988">
    <property type="entry name" value="UreE_N"/>
    <property type="match status" value="1"/>
</dbReference>
<dbReference type="SUPFAM" id="SSF69737">
    <property type="entry name" value="Urease metallochaperone UreE, C-terminal domain"/>
    <property type="match status" value="1"/>
</dbReference>
<dbReference type="SUPFAM" id="SSF69287">
    <property type="entry name" value="Urease metallochaperone UreE, N-terminal domain"/>
    <property type="match status" value="1"/>
</dbReference>
<accession>Q92MY3</accession>
<evidence type="ECO:0000255" key="1">
    <source>
        <dbReference type="HAMAP-Rule" id="MF_00822"/>
    </source>
</evidence>
<comment type="function">
    <text evidence="1">Involved in urease metallocenter assembly. Binds nickel. Probably functions as a nickel donor during metallocenter assembly.</text>
</comment>
<comment type="subcellular location">
    <subcellularLocation>
        <location evidence="1">Cytoplasm</location>
    </subcellularLocation>
</comment>
<comment type="similarity">
    <text evidence="1">Belongs to the UreE family.</text>
</comment>
<proteinExistence type="inferred from homology"/>
<reference key="1">
    <citation type="journal article" date="2001" name="Proc. Natl. Acad. Sci. U.S.A.">
        <title>Analysis of the chromosome sequence of the legume symbiont Sinorhizobium meliloti strain 1021.</title>
        <authorList>
            <person name="Capela D."/>
            <person name="Barloy-Hubler F."/>
            <person name="Gouzy J."/>
            <person name="Bothe G."/>
            <person name="Ampe F."/>
            <person name="Batut J."/>
            <person name="Boistard P."/>
            <person name="Becker A."/>
            <person name="Boutry M."/>
            <person name="Cadieu E."/>
            <person name="Dreano S."/>
            <person name="Gloux S."/>
            <person name="Godrie T."/>
            <person name="Goffeau A."/>
            <person name="Kahn D."/>
            <person name="Kiss E."/>
            <person name="Lelaure V."/>
            <person name="Masuy D."/>
            <person name="Pohl T."/>
            <person name="Portetelle D."/>
            <person name="Puehler A."/>
            <person name="Purnelle B."/>
            <person name="Ramsperger U."/>
            <person name="Renard C."/>
            <person name="Thebault P."/>
            <person name="Vandenbol M."/>
            <person name="Weidner S."/>
            <person name="Galibert F."/>
        </authorList>
    </citation>
    <scope>NUCLEOTIDE SEQUENCE [LARGE SCALE GENOMIC DNA]</scope>
    <source>
        <strain>1021</strain>
    </source>
</reference>
<reference key="2">
    <citation type="journal article" date="2001" name="Science">
        <title>The composite genome of the legume symbiont Sinorhizobium meliloti.</title>
        <authorList>
            <person name="Galibert F."/>
            <person name="Finan T.M."/>
            <person name="Long S.R."/>
            <person name="Puehler A."/>
            <person name="Abola P."/>
            <person name="Ampe F."/>
            <person name="Barloy-Hubler F."/>
            <person name="Barnett M.J."/>
            <person name="Becker A."/>
            <person name="Boistard P."/>
            <person name="Bothe G."/>
            <person name="Boutry M."/>
            <person name="Bowser L."/>
            <person name="Buhrmester J."/>
            <person name="Cadieu E."/>
            <person name="Capela D."/>
            <person name="Chain P."/>
            <person name="Cowie A."/>
            <person name="Davis R.W."/>
            <person name="Dreano S."/>
            <person name="Federspiel N.A."/>
            <person name="Fisher R.F."/>
            <person name="Gloux S."/>
            <person name="Godrie T."/>
            <person name="Goffeau A."/>
            <person name="Golding B."/>
            <person name="Gouzy J."/>
            <person name="Gurjal M."/>
            <person name="Hernandez-Lucas I."/>
            <person name="Hong A."/>
            <person name="Huizar L."/>
            <person name="Hyman R.W."/>
            <person name="Jones T."/>
            <person name="Kahn D."/>
            <person name="Kahn M.L."/>
            <person name="Kalman S."/>
            <person name="Keating D.H."/>
            <person name="Kiss E."/>
            <person name="Komp C."/>
            <person name="Lelaure V."/>
            <person name="Masuy D."/>
            <person name="Palm C."/>
            <person name="Peck M.C."/>
            <person name="Pohl T.M."/>
            <person name="Portetelle D."/>
            <person name="Purnelle B."/>
            <person name="Ramsperger U."/>
            <person name="Surzycki R."/>
            <person name="Thebault P."/>
            <person name="Vandenbol M."/>
            <person name="Vorhoelter F.J."/>
            <person name="Weidner S."/>
            <person name="Wells D.H."/>
            <person name="Wong K."/>
            <person name="Yeh K.-C."/>
            <person name="Batut J."/>
        </authorList>
    </citation>
    <scope>NUCLEOTIDE SEQUENCE [LARGE SCALE GENOMIC DNA]</scope>
    <source>
        <strain>1021</strain>
    </source>
</reference>
<name>UREE_RHIME</name>